<dbReference type="EMBL" id="CP000720">
    <property type="protein sequence ID" value="ABS47590.1"/>
    <property type="molecule type" value="Genomic_DNA"/>
</dbReference>
<dbReference type="RefSeq" id="WP_002218932.1">
    <property type="nucleotide sequence ID" value="NC_009708.1"/>
</dbReference>
<dbReference type="SMR" id="A7FNN5"/>
<dbReference type="GeneID" id="96663196"/>
<dbReference type="KEGG" id="ypi:YpsIP31758_3915"/>
<dbReference type="HOGENOM" id="CLU_044142_4_1_6"/>
<dbReference type="Proteomes" id="UP000002412">
    <property type="component" value="Chromosome"/>
</dbReference>
<dbReference type="GO" id="GO:0022625">
    <property type="term" value="C:cytosolic large ribosomal subunit"/>
    <property type="evidence" value="ECO:0007669"/>
    <property type="project" value="TreeGrafter"/>
</dbReference>
<dbReference type="GO" id="GO:0019843">
    <property type="term" value="F:rRNA binding"/>
    <property type="evidence" value="ECO:0007669"/>
    <property type="project" value="UniProtKB-UniRule"/>
</dbReference>
<dbReference type="GO" id="GO:0003735">
    <property type="term" value="F:structural constituent of ribosome"/>
    <property type="evidence" value="ECO:0007669"/>
    <property type="project" value="InterPro"/>
</dbReference>
<dbReference type="GO" id="GO:0006412">
    <property type="term" value="P:translation"/>
    <property type="evidence" value="ECO:0007669"/>
    <property type="project" value="UniProtKB-UniRule"/>
</dbReference>
<dbReference type="FunFam" id="2.40.30.10:FF:000004">
    <property type="entry name" value="50S ribosomal protein L3"/>
    <property type="match status" value="1"/>
</dbReference>
<dbReference type="FunFam" id="3.30.160.810:FF:000001">
    <property type="entry name" value="50S ribosomal protein L3"/>
    <property type="match status" value="1"/>
</dbReference>
<dbReference type="Gene3D" id="3.30.160.810">
    <property type="match status" value="1"/>
</dbReference>
<dbReference type="Gene3D" id="2.40.30.10">
    <property type="entry name" value="Translation factors"/>
    <property type="match status" value="1"/>
</dbReference>
<dbReference type="HAMAP" id="MF_01325_B">
    <property type="entry name" value="Ribosomal_uL3_B"/>
    <property type="match status" value="1"/>
</dbReference>
<dbReference type="InterPro" id="IPR000597">
    <property type="entry name" value="Ribosomal_uL3"/>
</dbReference>
<dbReference type="InterPro" id="IPR019927">
    <property type="entry name" value="Ribosomal_uL3_bac/org-type"/>
</dbReference>
<dbReference type="InterPro" id="IPR019926">
    <property type="entry name" value="Ribosomal_uL3_CS"/>
</dbReference>
<dbReference type="InterPro" id="IPR009000">
    <property type="entry name" value="Transl_B-barrel_sf"/>
</dbReference>
<dbReference type="NCBIfam" id="TIGR03625">
    <property type="entry name" value="L3_bact"/>
    <property type="match status" value="1"/>
</dbReference>
<dbReference type="PANTHER" id="PTHR11229">
    <property type="entry name" value="50S RIBOSOMAL PROTEIN L3"/>
    <property type="match status" value="1"/>
</dbReference>
<dbReference type="PANTHER" id="PTHR11229:SF16">
    <property type="entry name" value="LARGE RIBOSOMAL SUBUNIT PROTEIN UL3C"/>
    <property type="match status" value="1"/>
</dbReference>
<dbReference type="Pfam" id="PF00297">
    <property type="entry name" value="Ribosomal_L3"/>
    <property type="match status" value="1"/>
</dbReference>
<dbReference type="SUPFAM" id="SSF50447">
    <property type="entry name" value="Translation proteins"/>
    <property type="match status" value="1"/>
</dbReference>
<dbReference type="PROSITE" id="PS00474">
    <property type="entry name" value="RIBOSOMAL_L3"/>
    <property type="match status" value="1"/>
</dbReference>
<feature type="chain" id="PRO_1000067573" description="Large ribosomal subunit protein uL3">
    <location>
        <begin position="1"/>
        <end position="209"/>
    </location>
</feature>
<feature type="region of interest" description="Disordered" evidence="2">
    <location>
        <begin position="133"/>
        <end position="152"/>
    </location>
</feature>
<feature type="modified residue" description="N5-methylglutamine" evidence="1">
    <location>
        <position position="150"/>
    </location>
</feature>
<comment type="function">
    <text evidence="1">One of the primary rRNA binding proteins, it binds directly near the 3'-end of the 23S rRNA, where it nucleates assembly of the 50S subunit.</text>
</comment>
<comment type="subunit">
    <text evidence="1">Part of the 50S ribosomal subunit. Forms a cluster with proteins L14 and L19.</text>
</comment>
<comment type="PTM">
    <text evidence="1">Methylated by PrmB.</text>
</comment>
<comment type="similarity">
    <text evidence="1">Belongs to the universal ribosomal protein uL3 family.</text>
</comment>
<name>RL3_YERP3</name>
<accession>A7FNN5</accession>
<reference key="1">
    <citation type="journal article" date="2007" name="PLoS Genet.">
        <title>The complete genome sequence of Yersinia pseudotuberculosis IP31758, the causative agent of Far East scarlet-like fever.</title>
        <authorList>
            <person name="Eppinger M."/>
            <person name="Rosovitz M.J."/>
            <person name="Fricke W.F."/>
            <person name="Rasko D.A."/>
            <person name="Kokorina G."/>
            <person name="Fayolle C."/>
            <person name="Lindler L.E."/>
            <person name="Carniel E."/>
            <person name="Ravel J."/>
        </authorList>
    </citation>
    <scope>NUCLEOTIDE SEQUENCE [LARGE SCALE GENOMIC DNA]</scope>
    <source>
        <strain>IP 31758</strain>
    </source>
</reference>
<gene>
    <name evidence="1" type="primary">rplC</name>
    <name type="ordered locus">YpsIP31758_3915</name>
</gene>
<sequence>MIGLVGKKVGMTRIFTEDGVSIPVTVIEIEANRVTQVKSLENDGYRAVQVTTGAKKANRVTKPEAGHFAKAGVEAGRGLWEFRLPEGQEFTAGQEISVEIFADVKKVDVTGTSKGKGFAGTVKRWNFRTQDATHGNSLSHRVPGSIGQNQTPGKVFKGKKMAGHMGDERVTVQSLDVVRVDAERNLLLVKGAVPGATGGNLIVKPAVKA</sequence>
<evidence type="ECO:0000255" key="1">
    <source>
        <dbReference type="HAMAP-Rule" id="MF_01325"/>
    </source>
</evidence>
<evidence type="ECO:0000256" key="2">
    <source>
        <dbReference type="SAM" id="MobiDB-lite"/>
    </source>
</evidence>
<evidence type="ECO:0000305" key="3"/>
<protein>
    <recommendedName>
        <fullName evidence="1">Large ribosomal subunit protein uL3</fullName>
    </recommendedName>
    <alternativeName>
        <fullName evidence="3">50S ribosomal protein L3</fullName>
    </alternativeName>
</protein>
<organism>
    <name type="scientific">Yersinia pseudotuberculosis serotype O:1b (strain IP 31758)</name>
    <dbReference type="NCBI Taxonomy" id="349747"/>
    <lineage>
        <taxon>Bacteria</taxon>
        <taxon>Pseudomonadati</taxon>
        <taxon>Pseudomonadota</taxon>
        <taxon>Gammaproteobacteria</taxon>
        <taxon>Enterobacterales</taxon>
        <taxon>Yersiniaceae</taxon>
        <taxon>Yersinia</taxon>
    </lineage>
</organism>
<keyword id="KW-0488">Methylation</keyword>
<keyword id="KW-0687">Ribonucleoprotein</keyword>
<keyword id="KW-0689">Ribosomal protein</keyword>
<keyword id="KW-0694">RNA-binding</keyword>
<keyword id="KW-0699">rRNA-binding</keyword>
<proteinExistence type="inferred from homology"/>